<protein>
    <recommendedName>
        <fullName>Somatostatin receptor type 4</fullName>
        <shortName>SS-4-R</shortName>
        <shortName>SS4-R</shortName>
        <shortName>SS4R</shortName>
    </recommendedName>
</protein>
<evidence type="ECO:0000255" key="1"/>
<evidence type="ECO:0000255" key="2">
    <source>
        <dbReference type="PROSITE-ProRule" id="PRU00521"/>
    </source>
</evidence>
<evidence type="ECO:0000256" key="3">
    <source>
        <dbReference type="SAM" id="MobiDB-lite"/>
    </source>
</evidence>
<organism>
    <name type="scientific">Rattus norvegicus</name>
    <name type="common">Rat</name>
    <dbReference type="NCBI Taxonomy" id="10116"/>
    <lineage>
        <taxon>Eukaryota</taxon>
        <taxon>Metazoa</taxon>
        <taxon>Chordata</taxon>
        <taxon>Craniata</taxon>
        <taxon>Vertebrata</taxon>
        <taxon>Euteleostomi</taxon>
        <taxon>Mammalia</taxon>
        <taxon>Eutheria</taxon>
        <taxon>Euarchontoglires</taxon>
        <taxon>Glires</taxon>
        <taxon>Rodentia</taxon>
        <taxon>Myomorpha</taxon>
        <taxon>Muroidea</taxon>
        <taxon>Muridae</taxon>
        <taxon>Murinae</taxon>
        <taxon>Rattus</taxon>
    </lineage>
</organism>
<comment type="function">
    <text>Receptor for somatostatin-14. The activity of this receptor is mediated by G proteins which inhibits adenylyl cyclase. It is functionally coupled not only to inhibition of adenylate cyclase, but also to activation of both arachidonate release and mitogen-activated protein (MAP) kinase cascade.</text>
</comment>
<comment type="interaction">
    <interactant intactId="EBI-7665959">
        <id>P30937</id>
    </interactant>
    <interactant intactId="EBI-375655">
        <id>P31016</id>
        <label>Dlg4</label>
    </interactant>
    <organismsDiffer>false</organismsDiffer>
    <experiments>3</experiments>
</comment>
<comment type="subcellular location">
    <subcellularLocation>
        <location>Cell membrane</location>
        <topology>Multi-pass membrane protein</topology>
    </subcellularLocation>
</comment>
<comment type="tissue specificity">
    <text>Brain, lung, heart and islets. Moderate levels in the hippocampus, cortex and olfactory bulb.</text>
</comment>
<comment type="similarity">
    <text evidence="2">Belongs to the G-protein coupled receptor 1 family.</text>
</comment>
<sequence length="384" mass="42088">MNTPATLPLGGEDTTWTPGINASWAPDEEEDAVRSDGTGTAGMVTIQCIYALVCLVGLVGNALVIFVILRYAKMKTATNIYLLNLAVADELFMLSVPFVASAAALRHWPFGAVLCRAVLSVDGLNMFTSVFCLTVLSVDRYVAVVHPLRAATYRRPSVAKLINLGVWLASLLVTLPIAVFADTRPARGGEAVACNLHWPHPAWSAVFVIYTFLLGFLLPVLAIGLCYLLIVGKMRAVALRAGWQQRRRSEKKITRLVLMVVTVFVLCWMPFYVVQLLNLFVTSLDATVNHVSLILSYANSCANPILYGFLSDNFRRSFQRVLCLRCCLLETTGGAEEEPLDYYATALKSRGGPGCICPPLPCQQEPMQAEPACKRVPFTKTTTF</sequence>
<proteinExistence type="evidence at protein level"/>
<dbReference type="EMBL" id="M96544">
    <property type="protein sequence ID" value="AAA42180.1"/>
    <property type="molecule type" value="Genomic_DNA"/>
</dbReference>
<dbReference type="EMBL" id="U04738">
    <property type="protein sequence ID" value="AAA17519.1"/>
    <property type="molecule type" value="mRNA"/>
</dbReference>
<dbReference type="PIR" id="A47249">
    <property type="entry name" value="A47249"/>
</dbReference>
<dbReference type="RefSeq" id="NP_037168.1">
    <property type="nucleotide sequence ID" value="NM_013036.3"/>
</dbReference>
<dbReference type="SMR" id="P30937"/>
<dbReference type="BioGRID" id="247586">
    <property type="interactions" value="1"/>
</dbReference>
<dbReference type="CORUM" id="P30937"/>
<dbReference type="FunCoup" id="P30937">
    <property type="interactions" value="115"/>
</dbReference>
<dbReference type="IntAct" id="P30937">
    <property type="interactions" value="1"/>
</dbReference>
<dbReference type="MINT" id="P30937"/>
<dbReference type="STRING" id="10116.ENSRNOP00000066231"/>
<dbReference type="BindingDB" id="P30937"/>
<dbReference type="ChEMBL" id="CHEMBL2096977"/>
<dbReference type="DrugCentral" id="P30937"/>
<dbReference type="GuidetoPHARMACOLOGY" id="358"/>
<dbReference type="GlyCosmos" id="P30937">
    <property type="glycosylation" value="1 site, No reported glycans"/>
</dbReference>
<dbReference type="GlyGen" id="P30937">
    <property type="glycosylation" value="1 site"/>
</dbReference>
<dbReference type="PhosphoSitePlus" id="P30937"/>
<dbReference type="PaxDb" id="10116-ENSRNOP00000066231"/>
<dbReference type="Ensembl" id="ENSRNOT00000006181.7">
    <property type="protein sequence ID" value="ENSRNOP00000066231.1"/>
    <property type="gene ID" value="ENSRNOG00000004641.7"/>
</dbReference>
<dbReference type="GeneID" id="25555"/>
<dbReference type="KEGG" id="rno:25555"/>
<dbReference type="UCSC" id="RGD:3764">
    <property type="organism name" value="rat"/>
</dbReference>
<dbReference type="AGR" id="RGD:3764"/>
<dbReference type="CTD" id="6754"/>
<dbReference type="RGD" id="3764">
    <property type="gene designation" value="Sstr4"/>
</dbReference>
<dbReference type="eggNOG" id="KOG3656">
    <property type="taxonomic scope" value="Eukaryota"/>
</dbReference>
<dbReference type="GeneTree" id="ENSGT00940000156819"/>
<dbReference type="HOGENOM" id="CLU_009579_8_1_1"/>
<dbReference type="InParanoid" id="P30937"/>
<dbReference type="OMA" id="AIQCIYA"/>
<dbReference type="OrthoDB" id="6076970at2759"/>
<dbReference type="PhylomeDB" id="P30937"/>
<dbReference type="Reactome" id="R-RNO-375276">
    <property type="pathway name" value="Peptide ligand-binding receptors"/>
</dbReference>
<dbReference type="Reactome" id="R-RNO-418594">
    <property type="pathway name" value="G alpha (i) signalling events"/>
</dbReference>
<dbReference type="PRO" id="PR:P30937"/>
<dbReference type="Proteomes" id="UP000002494">
    <property type="component" value="Chromosome 3"/>
</dbReference>
<dbReference type="Bgee" id="ENSRNOG00000004641">
    <property type="expression patterns" value="Expressed in lung and 5 other cell types or tissues"/>
</dbReference>
<dbReference type="GO" id="GO:0043005">
    <property type="term" value="C:neuron projection"/>
    <property type="evidence" value="ECO:0000318"/>
    <property type="project" value="GO_Central"/>
</dbReference>
<dbReference type="GO" id="GO:0005886">
    <property type="term" value="C:plasma membrane"/>
    <property type="evidence" value="ECO:0000318"/>
    <property type="project" value="GO_Central"/>
</dbReference>
<dbReference type="GO" id="GO:0042923">
    <property type="term" value="F:neuropeptide binding"/>
    <property type="evidence" value="ECO:0000318"/>
    <property type="project" value="GO_Central"/>
</dbReference>
<dbReference type="GO" id="GO:0004994">
    <property type="term" value="F:somatostatin receptor activity"/>
    <property type="evidence" value="ECO:0000314"/>
    <property type="project" value="RGD"/>
</dbReference>
<dbReference type="GO" id="GO:0016477">
    <property type="term" value="P:cell migration"/>
    <property type="evidence" value="ECO:0000314"/>
    <property type="project" value="RGD"/>
</dbReference>
<dbReference type="GO" id="GO:0071385">
    <property type="term" value="P:cellular response to glucocorticoid stimulus"/>
    <property type="evidence" value="ECO:0000270"/>
    <property type="project" value="RGD"/>
</dbReference>
<dbReference type="GO" id="GO:0030900">
    <property type="term" value="P:forebrain development"/>
    <property type="evidence" value="ECO:0000270"/>
    <property type="project" value="RGD"/>
</dbReference>
<dbReference type="GO" id="GO:0106072">
    <property type="term" value="P:negative regulation of adenylate cyclase-activating G protein-coupled receptor signaling pathway"/>
    <property type="evidence" value="ECO:0000314"/>
    <property type="project" value="RGD"/>
</dbReference>
<dbReference type="GO" id="GO:0007218">
    <property type="term" value="P:neuropeptide signaling pathway"/>
    <property type="evidence" value="ECO:0000318"/>
    <property type="project" value="GO_Central"/>
</dbReference>
<dbReference type="GO" id="GO:0090238">
    <property type="term" value="P:positive regulation of arachidonate secretion"/>
    <property type="evidence" value="ECO:0000314"/>
    <property type="project" value="RGD"/>
</dbReference>
<dbReference type="GO" id="GO:0070374">
    <property type="term" value="P:positive regulation of ERK1 and ERK2 cascade"/>
    <property type="evidence" value="ECO:0000314"/>
    <property type="project" value="RGD"/>
</dbReference>
<dbReference type="CDD" id="cd15973">
    <property type="entry name" value="7tmA_SSTR4"/>
    <property type="match status" value="1"/>
</dbReference>
<dbReference type="FunFam" id="1.20.1070.10:FF:000060">
    <property type="entry name" value="Somatostatin receptor type 1"/>
    <property type="match status" value="1"/>
</dbReference>
<dbReference type="Gene3D" id="1.20.1070.10">
    <property type="entry name" value="Rhodopsin 7-helix transmembrane proteins"/>
    <property type="match status" value="1"/>
</dbReference>
<dbReference type="InterPro" id="IPR000276">
    <property type="entry name" value="GPCR_Rhodpsn"/>
</dbReference>
<dbReference type="InterPro" id="IPR017452">
    <property type="entry name" value="GPCR_Rhodpsn_7TM"/>
</dbReference>
<dbReference type="InterPro" id="IPR000586">
    <property type="entry name" value="Somatstn_rcpt"/>
</dbReference>
<dbReference type="InterPro" id="IPR001512">
    <property type="entry name" value="Somatstn_rcpt_4"/>
</dbReference>
<dbReference type="PANTHER" id="PTHR24229">
    <property type="entry name" value="NEUROPEPTIDES RECEPTOR"/>
    <property type="match status" value="1"/>
</dbReference>
<dbReference type="PANTHER" id="PTHR24229:SF35">
    <property type="entry name" value="SOMATOSTATIN RECEPTOR TYPE 4"/>
    <property type="match status" value="1"/>
</dbReference>
<dbReference type="Pfam" id="PF00001">
    <property type="entry name" value="7tm_1"/>
    <property type="match status" value="1"/>
</dbReference>
<dbReference type="PRINTS" id="PR00237">
    <property type="entry name" value="GPCRRHODOPSN"/>
</dbReference>
<dbReference type="PRINTS" id="PR00246">
    <property type="entry name" value="SOMATOSTATNR"/>
</dbReference>
<dbReference type="PRINTS" id="PR00590">
    <property type="entry name" value="SOMATOSTTN4R"/>
</dbReference>
<dbReference type="SMART" id="SM01381">
    <property type="entry name" value="7TM_GPCR_Srsx"/>
    <property type="match status" value="1"/>
</dbReference>
<dbReference type="SUPFAM" id="SSF81321">
    <property type="entry name" value="Family A G protein-coupled receptor-like"/>
    <property type="match status" value="1"/>
</dbReference>
<dbReference type="PROSITE" id="PS00237">
    <property type="entry name" value="G_PROTEIN_RECEP_F1_1"/>
    <property type="match status" value="1"/>
</dbReference>
<dbReference type="PROSITE" id="PS50262">
    <property type="entry name" value="G_PROTEIN_RECEP_F1_2"/>
    <property type="match status" value="1"/>
</dbReference>
<feature type="chain" id="PRO_0000070129" description="Somatostatin receptor type 4">
    <location>
        <begin position="1"/>
        <end position="384"/>
    </location>
</feature>
<feature type="topological domain" description="Extracellular" evidence="1">
    <location>
        <begin position="1"/>
        <end position="41"/>
    </location>
</feature>
<feature type="transmembrane region" description="Helical; Name=1" evidence="1">
    <location>
        <begin position="42"/>
        <end position="69"/>
    </location>
</feature>
<feature type="topological domain" description="Cytoplasmic" evidence="1">
    <location>
        <begin position="70"/>
        <end position="79"/>
    </location>
</feature>
<feature type="transmembrane region" description="Helical; Name=2" evidence="1">
    <location>
        <begin position="80"/>
        <end position="105"/>
    </location>
</feature>
<feature type="topological domain" description="Extracellular" evidence="1">
    <location>
        <begin position="106"/>
        <end position="116"/>
    </location>
</feature>
<feature type="transmembrane region" description="Helical; Name=3" evidence="1">
    <location>
        <begin position="117"/>
        <end position="138"/>
    </location>
</feature>
<feature type="topological domain" description="Cytoplasmic" evidence="1">
    <location>
        <begin position="139"/>
        <end position="160"/>
    </location>
</feature>
<feature type="transmembrane region" description="Helical; Name=4" evidence="1">
    <location>
        <begin position="161"/>
        <end position="181"/>
    </location>
</feature>
<feature type="topological domain" description="Extracellular" evidence="1">
    <location>
        <begin position="182"/>
        <end position="203"/>
    </location>
</feature>
<feature type="transmembrane region" description="Helical; Name=5" evidence="1">
    <location>
        <begin position="204"/>
        <end position="228"/>
    </location>
</feature>
<feature type="topological domain" description="Cytoplasmic" evidence="1">
    <location>
        <begin position="229"/>
        <end position="254"/>
    </location>
</feature>
<feature type="transmembrane region" description="Helical; Name=6" evidence="1">
    <location>
        <begin position="255"/>
        <end position="280"/>
    </location>
</feature>
<feature type="topological domain" description="Extracellular" evidence="1">
    <location>
        <begin position="281"/>
        <end position="287"/>
    </location>
</feature>
<feature type="transmembrane region" description="Helical; Name=7" evidence="1">
    <location>
        <begin position="288"/>
        <end position="311"/>
    </location>
</feature>
<feature type="topological domain" description="Cytoplasmic" evidence="1">
    <location>
        <begin position="312"/>
        <end position="384"/>
    </location>
</feature>
<feature type="region of interest" description="Disordered" evidence="3">
    <location>
        <begin position="1"/>
        <end position="34"/>
    </location>
</feature>
<feature type="lipid moiety-binding region" description="S-palmitoyl cysteine" evidence="1">
    <location>
        <position position="323"/>
    </location>
</feature>
<feature type="glycosylation site" description="N-linked (GlcNAc...) asparagine" evidence="1">
    <location>
        <position position="21"/>
    </location>
</feature>
<feature type="disulfide bond" evidence="2">
    <location>
        <begin position="115"/>
        <end position="194"/>
    </location>
</feature>
<name>SSR4_RAT</name>
<gene>
    <name type="primary">Sstr4</name>
</gene>
<reference key="1">
    <citation type="journal article" date="1992" name="Proc. Natl. Acad. Sci. U.S.A.">
        <title>Molecular cloning and functional expression of a brain-specific somatostatin receptor.</title>
        <authorList>
            <person name="Bruno J.F."/>
            <person name="Xu Y."/>
            <person name="Song J."/>
            <person name="Berelowitz M."/>
        </authorList>
    </citation>
    <scope>NUCLEOTIDE SEQUENCE [GENOMIC DNA]</scope>
    <source>
        <tissue>Brain</tissue>
    </source>
</reference>
<reference key="2">
    <citation type="journal article" date="1994" name="J. Biol. Chem.">
        <title>Functional coupling of SSTR4, a major hippocampal somatostatin receptor, to adenylate cyclase inhibition, arachidonate release and activation of the mitogen-activated protein kinase cascade.</title>
        <authorList>
            <person name="Bito H."/>
            <person name="Mori M."/>
            <person name="Sakanaka C."/>
            <person name="Takano T."/>
            <person name="Honda Z."/>
            <person name="Gotoh Y."/>
            <person name="Nishida E."/>
            <person name="Shimizu T."/>
        </authorList>
    </citation>
    <scope>NUCLEOTIDE SEQUENCE [MRNA]</scope>
    <source>
        <strain>Sprague-Dawley</strain>
        <tissue>Hippocampus</tissue>
    </source>
</reference>
<accession>P30937</accession>
<keyword id="KW-1003">Cell membrane</keyword>
<keyword id="KW-1015">Disulfide bond</keyword>
<keyword id="KW-0297">G-protein coupled receptor</keyword>
<keyword id="KW-0325">Glycoprotein</keyword>
<keyword id="KW-0449">Lipoprotein</keyword>
<keyword id="KW-0472">Membrane</keyword>
<keyword id="KW-0564">Palmitate</keyword>
<keyword id="KW-0675">Receptor</keyword>
<keyword id="KW-1185">Reference proteome</keyword>
<keyword id="KW-0807">Transducer</keyword>
<keyword id="KW-0812">Transmembrane</keyword>
<keyword id="KW-1133">Transmembrane helix</keyword>